<name>MEPA_STAA8</name>
<accession>Q2G140</accession>
<accession>Q5Y811</accession>
<protein>
    <recommendedName>
        <fullName>Multidrug export protein MepA</fullName>
    </recommendedName>
    <alternativeName>
        <fullName>Staphylococcal virulence regulator protein A</fullName>
    </alternativeName>
</protein>
<dbReference type="EMBL" id="AY661734">
    <property type="protein sequence ID" value="AAU95768.1"/>
    <property type="molecule type" value="Genomic_DNA"/>
</dbReference>
<dbReference type="EMBL" id="CP000253">
    <property type="protein sequence ID" value="ABD29484.1"/>
    <property type="molecule type" value="Genomic_DNA"/>
</dbReference>
<dbReference type="RefSeq" id="WP_000651060.1">
    <property type="nucleotide sequence ID" value="NZ_LS483365.1"/>
</dbReference>
<dbReference type="RefSeq" id="YP_498905.1">
    <property type="nucleotide sequence ID" value="NC_007795.1"/>
</dbReference>
<dbReference type="SMR" id="Q2G140"/>
<dbReference type="STRING" id="93061.SAOUHSC_00315"/>
<dbReference type="ChEMBL" id="CHEMBL4295596"/>
<dbReference type="TCDB" id="2.A.66.1.13">
    <property type="family name" value="the multidrug/oligosaccharidyl-lipid/polysaccharide (mop) flippase superfamily"/>
</dbReference>
<dbReference type="PaxDb" id="1280-SAXN108_0383"/>
<dbReference type="GeneID" id="3919542"/>
<dbReference type="KEGG" id="sao:SAOUHSC_00315"/>
<dbReference type="PATRIC" id="fig|93061.5.peg.287"/>
<dbReference type="eggNOG" id="COG0534">
    <property type="taxonomic scope" value="Bacteria"/>
</dbReference>
<dbReference type="HOGENOM" id="CLU_012893_0_1_9"/>
<dbReference type="OrthoDB" id="9776324at2"/>
<dbReference type="PRO" id="PR:Q2G140"/>
<dbReference type="Proteomes" id="UP000008816">
    <property type="component" value="Chromosome"/>
</dbReference>
<dbReference type="GO" id="GO:0005886">
    <property type="term" value="C:plasma membrane"/>
    <property type="evidence" value="ECO:0007669"/>
    <property type="project" value="UniProtKB-SubCell"/>
</dbReference>
<dbReference type="GO" id="GO:0015297">
    <property type="term" value="F:antiporter activity"/>
    <property type="evidence" value="ECO:0007669"/>
    <property type="project" value="InterPro"/>
</dbReference>
<dbReference type="GO" id="GO:0042910">
    <property type="term" value="F:xenobiotic transmembrane transporter activity"/>
    <property type="evidence" value="ECO:0007669"/>
    <property type="project" value="InterPro"/>
</dbReference>
<dbReference type="GO" id="GO:0046677">
    <property type="term" value="P:response to antibiotic"/>
    <property type="evidence" value="ECO:0007669"/>
    <property type="project" value="UniProtKB-KW"/>
</dbReference>
<dbReference type="CDD" id="cd13143">
    <property type="entry name" value="MATE_MepA_like"/>
    <property type="match status" value="1"/>
</dbReference>
<dbReference type="InterPro" id="IPR002528">
    <property type="entry name" value="MATE_fam"/>
</dbReference>
<dbReference type="InterPro" id="IPR045070">
    <property type="entry name" value="MATE_MepA-like"/>
</dbReference>
<dbReference type="InterPro" id="IPR051327">
    <property type="entry name" value="MATE_MepA_subfamily"/>
</dbReference>
<dbReference type="InterPro" id="IPR048279">
    <property type="entry name" value="MdtK-like"/>
</dbReference>
<dbReference type="NCBIfam" id="TIGR00797">
    <property type="entry name" value="matE"/>
    <property type="match status" value="1"/>
</dbReference>
<dbReference type="NCBIfam" id="NF000131">
    <property type="entry name" value="MATE_multi_MepA"/>
    <property type="match status" value="1"/>
</dbReference>
<dbReference type="PANTHER" id="PTHR43823:SF3">
    <property type="entry name" value="MULTIDRUG EXPORT PROTEIN MEPA"/>
    <property type="match status" value="1"/>
</dbReference>
<dbReference type="PANTHER" id="PTHR43823">
    <property type="entry name" value="SPORULATION PROTEIN YKVU"/>
    <property type="match status" value="1"/>
</dbReference>
<dbReference type="Pfam" id="PF01554">
    <property type="entry name" value="MatE"/>
    <property type="match status" value="2"/>
</dbReference>
<dbReference type="PIRSF" id="PIRSF006603">
    <property type="entry name" value="DinF"/>
    <property type="match status" value="1"/>
</dbReference>
<comment type="function">
    <text evidence="2 3">Multidrug resistance efflux protein involved in transporting several clinically relevant monovalent and divalent biocides and the fluoroquinolone antimicrobial agents norfloxacin and ciprofloxacin. Required for transcription of agr and RNAIII and involved in the production of protein A (spa) and toxins alpha, beta and delta.</text>
</comment>
<comment type="subcellular location">
    <subcellularLocation>
        <location evidence="5">Cell membrane</location>
        <topology evidence="5">Multi-pass membrane protein</topology>
    </subcellularLocation>
</comment>
<comment type="induction">
    <text evidence="3 4">Repressed by MepR.</text>
</comment>
<comment type="similarity">
    <text evidence="5">Belongs to the multi antimicrobial extrusion (MATE) (TC 2.A.66.1) family. MepA subfamily.</text>
</comment>
<proteinExistence type="evidence at protein level"/>
<sequence>MKDEQLYYFEKSPVFKAMMHFSLPMMIGTLLSVIYGILNIYFIGFLEDSHMISAISLTLPVFAILMGLGNLFGVGAGTYISRLLGAKDYSKSKFVSSFSIYGGIALGLIVILVTLPFSDQIAAILGARGETLALTSNYLKVMFLSAPFVILFFILEQFARAIGAPMVSMIGMLASVGLNIILDPILIFGFDLNVVGAALGTAISNVAAALFFIIYFMKNSDVVSVNIKLAKPNKEMLSEIFKIGIPAFLMSILMGFTGLVLNLFLAHYGNFAIASYGISFRLVQFPELIIMGLCEGVVPLIAYNFMANKGRMKDVIKAVIMSIGVIFVVCMSAVFTIGHHMVGLFTTDQAIVEMATFILKVTMASLLLNGIGFLFTGMLQATGQGRGATIMAILQGAIIIPVLFIMNALFGLTGVIWSLLIAESLCALAAMLIVYLLRDRLTVDTSELIEG</sequence>
<organism>
    <name type="scientific">Staphylococcus aureus (strain NCTC 8325 / PS 47)</name>
    <dbReference type="NCBI Taxonomy" id="93061"/>
    <lineage>
        <taxon>Bacteria</taxon>
        <taxon>Bacillati</taxon>
        <taxon>Bacillota</taxon>
        <taxon>Bacilli</taxon>
        <taxon>Bacillales</taxon>
        <taxon>Staphylococcaceae</taxon>
        <taxon>Staphylococcus</taxon>
    </lineage>
</organism>
<reference key="1">
    <citation type="journal article" date="2005" name="Antimicrob. Agents Chemother.">
        <title>Multidrug resistance in Staphylococcus aureus due to overexpression of a novel multidrug and toxin extrusion (MATE) transport protein.</title>
        <authorList>
            <person name="Kaatz G.W."/>
            <person name="McAleese F."/>
            <person name="Seo S.M."/>
        </authorList>
    </citation>
    <scope>NUCLEOTIDE SEQUENCE [GENOMIC DNA]</scope>
    <scope>FUNCTION IN MULTIDRUG RESISTANCE</scope>
    <scope>INDUCTION</scope>
</reference>
<reference key="2">
    <citation type="book" date="2006" name="Gram positive pathogens, 2nd edition">
        <title>The Staphylococcus aureus NCTC 8325 genome.</title>
        <editorList>
            <person name="Fischetti V."/>
            <person name="Novick R."/>
            <person name="Ferretti J."/>
            <person name="Portnoy D."/>
            <person name="Rood J."/>
        </editorList>
        <authorList>
            <person name="Gillaspy A.F."/>
            <person name="Worrell V."/>
            <person name="Orvis J."/>
            <person name="Roe B.A."/>
            <person name="Dyer D.W."/>
            <person name="Iandolo J.J."/>
        </authorList>
    </citation>
    <scope>NUCLEOTIDE SEQUENCE [LARGE SCALE GENOMIC DNA]</scope>
    <source>
        <strain>NCTC 8325 / PS 47</strain>
    </source>
</reference>
<reference key="3">
    <citation type="journal article" date="2002" name="Microbiology">
        <title>Staphylococcus aureus svrA: a gene required for virulence and expression of the agr locus.</title>
        <authorList>
            <person name="Garvis S."/>
            <person name="Mei J.-M."/>
            <person name="Ruiz-Albert J."/>
            <person name="Holden D.W."/>
        </authorList>
    </citation>
    <scope>ROLE IN VIRULENCE</scope>
</reference>
<reference key="4">
    <citation type="journal article" date="2006" name="Antimicrob. Agents Chemother.">
        <title>MepR, a repressor of the Staphylococcus aureus MATE family multidrug efflux pump MepA, is a substrate-responsive regulatory protein.</title>
        <authorList>
            <person name="Kaatz G.W."/>
            <person name="DeMarco C.E."/>
            <person name="Seo S.M."/>
        </authorList>
    </citation>
    <scope>INDUCTION</scope>
</reference>
<gene>
    <name type="primary">mepA</name>
    <name type="synonym">svrA</name>
    <name type="ordered locus">SAOUHSC_00315</name>
</gene>
<feature type="chain" id="PRO_0000290234" description="Multidrug export protein MepA">
    <location>
        <begin position="1"/>
        <end position="451"/>
    </location>
</feature>
<feature type="transmembrane region" description="Helical" evidence="1">
    <location>
        <begin position="26"/>
        <end position="46"/>
    </location>
</feature>
<feature type="transmembrane region" description="Helical" evidence="1">
    <location>
        <begin position="54"/>
        <end position="74"/>
    </location>
</feature>
<feature type="transmembrane region" description="Helical" evidence="1">
    <location>
        <begin position="97"/>
        <end position="117"/>
    </location>
</feature>
<feature type="transmembrane region" description="Helical" evidence="1">
    <location>
        <begin position="139"/>
        <end position="159"/>
    </location>
</feature>
<feature type="transmembrane region" description="Helical" evidence="1">
    <location>
        <begin position="170"/>
        <end position="190"/>
    </location>
</feature>
<feature type="transmembrane region" description="Helical" evidence="1">
    <location>
        <begin position="194"/>
        <end position="214"/>
    </location>
</feature>
<feature type="transmembrane region" description="Helical" evidence="1">
    <location>
        <begin position="245"/>
        <end position="265"/>
    </location>
</feature>
<feature type="transmembrane region" description="Helical" evidence="1">
    <location>
        <begin position="282"/>
        <end position="302"/>
    </location>
</feature>
<feature type="transmembrane region" description="Helical" evidence="1">
    <location>
        <begin position="318"/>
        <end position="338"/>
    </location>
</feature>
<feature type="transmembrane region" description="Helical" evidence="1">
    <location>
        <begin position="355"/>
        <end position="375"/>
    </location>
</feature>
<feature type="transmembrane region" description="Helical" evidence="1">
    <location>
        <begin position="397"/>
        <end position="417"/>
    </location>
</feature>
<feature type="transmembrane region" description="Helical" evidence="1">
    <location>
        <begin position="418"/>
        <end position="438"/>
    </location>
</feature>
<evidence type="ECO:0000255" key="1"/>
<evidence type="ECO:0000269" key="2">
    <source>
    </source>
</evidence>
<evidence type="ECO:0000269" key="3">
    <source>
    </source>
</evidence>
<evidence type="ECO:0000269" key="4">
    <source>
    </source>
</evidence>
<evidence type="ECO:0000305" key="5"/>
<keyword id="KW-0046">Antibiotic resistance</keyword>
<keyword id="KW-1003">Cell membrane</keyword>
<keyword id="KW-0472">Membrane</keyword>
<keyword id="KW-1185">Reference proteome</keyword>
<keyword id="KW-0812">Transmembrane</keyword>
<keyword id="KW-1133">Transmembrane helix</keyword>
<keyword id="KW-0813">Transport</keyword>